<proteinExistence type="inferred from homology"/>
<feature type="chain" id="PRO_0000363682" description="Probable cGMP 3',5'-cyclic phosphodiesterase subunit delta">
    <location>
        <begin position="1"/>
        <end position="151"/>
    </location>
</feature>
<reference evidence="3" key="1">
    <citation type="journal article" date="2007" name="Nature">
        <title>Evolution of genes and genomes on the Drosophila phylogeny.</title>
        <authorList>
            <consortium name="Drosophila 12 genomes consortium"/>
        </authorList>
    </citation>
    <scope>NUCLEOTIDE SEQUENCE [LARGE SCALE GENOMIC DNA]</scope>
    <source>
        <strain evidence="3">Tucson 14030-0811.24</strain>
    </source>
</reference>
<organism>
    <name type="scientific">Drosophila willistoni</name>
    <name type="common">Fruit fly</name>
    <dbReference type="NCBI Taxonomy" id="7260"/>
    <lineage>
        <taxon>Eukaryota</taxon>
        <taxon>Metazoa</taxon>
        <taxon>Ecdysozoa</taxon>
        <taxon>Arthropoda</taxon>
        <taxon>Hexapoda</taxon>
        <taxon>Insecta</taxon>
        <taxon>Pterygota</taxon>
        <taxon>Neoptera</taxon>
        <taxon>Endopterygota</taxon>
        <taxon>Diptera</taxon>
        <taxon>Brachycera</taxon>
        <taxon>Muscomorpha</taxon>
        <taxon>Ephydroidea</taxon>
        <taxon>Drosophilidae</taxon>
        <taxon>Drosophila</taxon>
        <taxon>Sophophora</taxon>
    </lineage>
</organism>
<keyword id="KW-0140">cGMP</keyword>
<keyword id="KW-0963">Cytoplasm</keyword>
<keyword id="KW-0539">Nucleus</keyword>
<keyword id="KW-1185">Reference proteome</keyword>
<sequence length="151" mass="17297">MGSDDLSAGDKIQKGFQINNMILRDADSGKIIWQENKDFSAPDVEHEARVPIKILDMRAVSREINFSTIESMENFRLDQKVLFKGRIMEEWFFEMGFVGANTTNTWQSTIEAAPESQMMPAKVLNGNVTIQTSFYDNETLITKSVVRLYYI</sequence>
<name>PDE6D_DROWI</name>
<evidence type="ECO:0000250" key="1">
    <source>
        <dbReference type="UniProtKB" id="Q9VLJ0"/>
    </source>
</evidence>
<evidence type="ECO:0000255" key="2"/>
<evidence type="ECO:0000312" key="3">
    <source>
        <dbReference type="EMBL" id="EDW80418.1"/>
    </source>
</evidence>
<comment type="subunit">
    <text evidence="1">Interacts with Pde6.</text>
</comment>
<comment type="subcellular location">
    <subcellularLocation>
        <location evidence="1">Nucleus</location>
    </subcellularLocation>
    <subcellularLocation>
        <location evidence="1">Cytoplasm</location>
    </subcellularLocation>
</comment>
<comment type="similarity">
    <text evidence="2">Belongs to the PDE6D/unc-119 family.</text>
</comment>
<accession>B4N7S9</accession>
<gene>
    <name evidence="1" type="primary">PrBP</name>
    <name type="ORF">GK18665</name>
</gene>
<dbReference type="EMBL" id="CH964214">
    <property type="protein sequence ID" value="EDW80418.1"/>
    <property type="molecule type" value="Genomic_DNA"/>
</dbReference>
<dbReference type="SMR" id="B4N7S9"/>
<dbReference type="STRING" id="7260.B4N7S9"/>
<dbReference type="EnsemblMetazoa" id="FBtr0249316">
    <property type="protein sequence ID" value="FBpp0247808"/>
    <property type="gene ID" value="FBgn0220663"/>
</dbReference>
<dbReference type="EnsemblMetazoa" id="XM_002069396.4">
    <property type="protein sequence ID" value="XP_002069432.1"/>
    <property type="gene ID" value="LOC6646779"/>
</dbReference>
<dbReference type="GeneID" id="6646779"/>
<dbReference type="KEGG" id="dwi:6646779"/>
<dbReference type="eggNOG" id="KOG4038">
    <property type="taxonomic scope" value="Eukaryota"/>
</dbReference>
<dbReference type="HOGENOM" id="CLU_119682_0_0_1"/>
<dbReference type="OMA" id="STNTWQN"/>
<dbReference type="OrthoDB" id="10248777at2759"/>
<dbReference type="PhylomeDB" id="B4N7S9"/>
<dbReference type="Proteomes" id="UP000007798">
    <property type="component" value="Unassembled WGS sequence"/>
</dbReference>
<dbReference type="GO" id="GO:0005737">
    <property type="term" value="C:cytoplasm"/>
    <property type="evidence" value="ECO:0000250"/>
    <property type="project" value="UniProtKB"/>
</dbReference>
<dbReference type="GO" id="GO:0005634">
    <property type="term" value="C:nucleus"/>
    <property type="evidence" value="ECO:0000250"/>
    <property type="project" value="UniProtKB"/>
</dbReference>
<dbReference type="GO" id="GO:0050953">
    <property type="term" value="P:sensory perception of light stimulus"/>
    <property type="evidence" value="ECO:0007669"/>
    <property type="project" value="InterPro"/>
</dbReference>
<dbReference type="FunFam" id="2.70.50.40:FF:000002">
    <property type="entry name" value="Retinal rod rhodopsin-sensitive cGMP 3',5'-cyclic phosphodiesterase subunit delta"/>
    <property type="match status" value="1"/>
</dbReference>
<dbReference type="Gene3D" id="2.70.50.40">
    <property type="entry name" value="GMP phosphodiesterase, delta subunit"/>
    <property type="match status" value="1"/>
</dbReference>
<dbReference type="InterPro" id="IPR014756">
    <property type="entry name" value="Ig_E-set"/>
</dbReference>
<dbReference type="InterPro" id="IPR008015">
    <property type="entry name" value="PDED_dom"/>
</dbReference>
<dbReference type="InterPro" id="IPR037036">
    <property type="entry name" value="PDED_dom_sf"/>
</dbReference>
<dbReference type="InterPro" id="IPR017287">
    <property type="entry name" value="Rhodop-sen_GMP-Pdiesterase_dsu"/>
</dbReference>
<dbReference type="PANTHER" id="PTHR12976">
    <property type="entry name" value="RETINAL ROD RHODOPSIN-SENSITIVE CGMP 3',5'-CYCLIC PHOSPHODIESTERASE DELTA-SUBUNIT"/>
    <property type="match status" value="1"/>
</dbReference>
<dbReference type="PANTHER" id="PTHR12976:SF0">
    <property type="entry name" value="RETINAL ROD RHODOPSIN-SENSITIVE CGMP 3',5'-CYCLIC PHOSPHODIESTERASE SUBUNIT DELTA"/>
    <property type="match status" value="1"/>
</dbReference>
<dbReference type="Pfam" id="PF05351">
    <property type="entry name" value="GMP_PDE_delta"/>
    <property type="match status" value="1"/>
</dbReference>
<dbReference type="PIRSF" id="PIRSF037825">
    <property type="entry name" value="GMP-Pdiesterase_delta"/>
    <property type="match status" value="1"/>
</dbReference>
<dbReference type="SUPFAM" id="SSF81296">
    <property type="entry name" value="E set domains"/>
    <property type="match status" value="1"/>
</dbReference>
<protein>
    <recommendedName>
        <fullName>Probable cGMP 3',5'-cyclic phosphodiesterase subunit delta</fullName>
    </recommendedName>
</protein>